<comment type="function">
    <text evidence="1">Binds as a heterodimer with protein bS6 to the central domain of the 16S rRNA, where it helps stabilize the platform of the 30S subunit.</text>
</comment>
<comment type="subunit">
    <text evidence="1">Part of the 30S ribosomal subunit. Forms a tight heterodimer with protein bS6.</text>
</comment>
<comment type="similarity">
    <text evidence="1">Belongs to the bacterial ribosomal protein bS18 family.</text>
</comment>
<name>RS18_ECO55</name>
<reference key="1">
    <citation type="journal article" date="2009" name="PLoS Genet.">
        <title>Organised genome dynamics in the Escherichia coli species results in highly diverse adaptive paths.</title>
        <authorList>
            <person name="Touchon M."/>
            <person name="Hoede C."/>
            <person name="Tenaillon O."/>
            <person name="Barbe V."/>
            <person name="Baeriswyl S."/>
            <person name="Bidet P."/>
            <person name="Bingen E."/>
            <person name="Bonacorsi S."/>
            <person name="Bouchier C."/>
            <person name="Bouvet O."/>
            <person name="Calteau A."/>
            <person name="Chiapello H."/>
            <person name="Clermont O."/>
            <person name="Cruveiller S."/>
            <person name="Danchin A."/>
            <person name="Diard M."/>
            <person name="Dossat C."/>
            <person name="Karoui M.E."/>
            <person name="Frapy E."/>
            <person name="Garry L."/>
            <person name="Ghigo J.M."/>
            <person name="Gilles A.M."/>
            <person name="Johnson J."/>
            <person name="Le Bouguenec C."/>
            <person name="Lescat M."/>
            <person name="Mangenot S."/>
            <person name="Martinez-Jehanne V."/>
            <person name="Matic I."/>
            <person name="Nassif X."/>
            <person name="Oztas S."/>
            <person name="Petit M.A."/>
            <person name="Pichon C."/>
            <person name="Rouy Z."/>
            <person name="Ruf C.S."/>
            <person name="Schneider D."/>
            <person name="Tourret J."/>
            <person name="Vacherie B."/>
            <person name="Vallenet D."/>
            <person name="Medigue C."/>
            <person name="Rocha E.P.C."/>
            <person name="Denamur E."/>
        </authorList>
    </citation>
    <scope>NUCLEOTIDE SEQUENCE [LARGE SCALE GENOMIC DNA]</scope>
    <source>
        <strain>55989 / EAEC</strain>
    </source>
</reference>
<organism>
    <name type="scientific">Escherichia coli (strain 55989 / EAEC)</name>
    <dbReference type="NCBI Taxonomy" id="585055"/>
    <lineage>
        <taxon>Bacteria</taxon>
        <taxon>Pseudomonadati</taxon>
        <taxon>Pseudomonadota</taxon>
        <taxon>Gammaproteobacteria</taxon>
        <taxon>Enterobacterales</taxon>
        <taxon>Enterobacteriaceae</taxon>
        <taxon>Escherichia</taxon>
    </lineage>
</organism>
<evidence type="ECO:0000255" key="1">
    <source>
        <dbReference type="HAMAP-Rule" id="MF_00270"/>
    </source>
</evidence>
<evidence type="ECO:0000305" key="2"/>
<gene>
    <name evidence="1" type="primary">rpsR</name>
    <name type="ordered locus">EC55989_4760</name>
</gene>
<keyword id="KW-1185">Reference proteome</keyword>
<keyword id="KW-0687">Ribonucleoprotein</keyword>
<keyword id="KW-0689">Ribosomal protein</keyword>
<keyword id="KW-0694">RNA-binding</keyword>
<keyword id="KW-0699">rRNA-binding</keyword>
<proteinExistence type="inferred from homology"/>
<protein>
    <recommendedName>
        <fullName evidence="1">Small ribosomal subunit protein bS18</fullName>
    </recommendedName>
    <alternativeName>
        <fullName evidence="2">30S ribosomal protein S18</fullName>
    </alternativeName>
</protein>
<sequence length="75" mass="8986">MARYFRRRKFCRFTAEGVQEIDYKDIATLKNYITESGKIVPSRITGTRAKYQRQLARAIKRARYLSLLPYTDRHQ</sequence>
<feature type="chain" id="PRO_1000125801" description="Small ribosomal subunit protein bS18">
    <location>
        <begin position="1"/>
        <end position="75"/>
    </location>
</feature>
<accession>B7LCR3</accession>
<dbReference type="EMBL" id="CU928145">
    <property type="protein sequence ID" value="CAV01702.1"/>
    <property type="molecule type" value="Genomic_DNA"/>
</dbReference>
<dbReference type="RefSeq" id="WP_000135199.1">
    <property type="nucleotide sequence ID" value="NZ_CP028304.1"/>
</dbReference>
<dbReference type="SMR" id="B7LCR3"/>
<dbReference type="GeneID" id="98186237"/>
<dbReference type="KEGG" id="eck:EC55989_4760"/>
<dbReference type="HOGENOM" id="CLU_148710_2_3_6"/>
<dbReference type="Proteomes" id="UP000000746">
    <property type="component" value="Chromosome"/>
</dbReference>
<dbReference type="GO" id="GO:0022627">
    <property type="term" value="C:cytosolic small ribosomal subunit"/>
    <property type="evidence" value="ECO:0007669"/>
    <property type="project" value="TreeGrafter"/>
</dbReference>
<dbReference type="GO" id="GO:0070181">
    <property type="term" value="F:small ribosomal subunit rRNA binding"/>
    <property type="evidence" value="ECO:0007669"/>
    <property type="project" value="TreeGrafter"/>
</dbReference>
<dbReference type="GO" id="GO:0003735">
    <property type="term" value="F:structural constituent of ribosome"/>
    <property type="evidence" value="ECO:0007669"/>
    <property type="project" value="InterPro"/>
</dbReference>
<dbReference type="GO" id="GO:0006412">
    <property type="term" value="P:translation"/>
    <property type="evidence" value="ECO:0007669"/>
    <property type="project" value="UniProtKB-UniRule"/>
</dbReference>
<dbReference type="FunFam" id="4.10.640.10:FF:000001">
    <property type="entry name" value="30S ribosomal protein S18"/>
    <property type="match status" value="1"/>
</dbReference>
<dbReference type="Gene3D" id="4.10.640.10">
    <property type="entry name" value="Ribosomal protein S18"/>
    <property type="match status" value="1"/>
</dbReference>
<dbReference type="HAMAP" id="MF_00270">
    <property type="entry name" value="Ribosomal_bS18"/>
    <property type="match status" value="1"/>
</dbReference>
<dbReference type="InterPro" id="IPR001648">
    <property type="entry name" value="Ribosomal_bS18"/>
</dbReference>
<dbReference type="InterPro" id="IPR018275">
    <property type="entry name" value="Ribosomal_bS18_CS"/>
</dbReference>
<dbReference type="InterPro" id="IPR036870">
    <property type="entry name" value="Ribosomal_bS18_sf"/>
</dbReference>
<dbReference type="NCBIfam" id="TIGR00165">
    <property type="entry name" value="S18"/>
    <property type="match status" value="1"/>
</dbReference>
<dbReference type="PANTHER" id="PTHR13479">
    <property type="entry name" value="30S RIBOSOMAL PROTEIN S18"/>
    <property type="match status" value="1"/>
</dbReference>
<dbReference type="PANTHER" id="PTHR13479:SF40">
    <property type="entry name" value="SMALL RIBOSOMAL SUBUNIT PROTEIN BS18M"/>
    <property type="match status" value="1"/>
</dbReference>
<dbReference type="Pfam" id="PF01084">
    <property type="entry name" value="Ribosomal_S18"/>
    <property type="match status" value="1"/>
</dbReference>
<dbReference type="PRINTS" id="PR00974">
    <property type="entry name" value="RIBOSOMALS18"/>
</dbReference>
<dbReference type="SUPFAM" id="SSF46911">
    <property type="entry name" value="Ribosomal protein S18"/>
    <property type="match status" value="1"/>
</dbReference>
<dbReference type="PROSITE" id="PS00057">
    <property type="entry name" value="RIBOSOMAL_S18"/>
    <property type="match status" value="1"/>
</dbReference>